<organism>
    <name type="scientific">Methanothermobacter thermautotrophicus (strain ATCC 29096 / DSM 1053 / JCM 10044 / NBRC 100330 / Delta H)</name>
    <name type="common">Methanobacterium thermoautotrophicum</name>
    <dbReference type="NCBI Taxonomy" id="187420"/>
    <lineage>
        <taxon>Archaea</taxon>
        <taxon>Methanobacteriati</taxon>
        <taxon>Methanobacteriota</taxon>
        <taxon>Methanomada group</taxon>
        <taxon>Methanobacteria</taxon>
        <taxon>Methanobacteriales</taxon>
        <taxon>Methanobacteriaceae</taxon>
        <taxon>Methanothermobacter</taxon>
    </lineage>
</organism>
<comment type="cofactor">
    <cofactor>
        <name>FMN</name>
        <dbReference type="ChEBI" id="CHEBI:58210"/>
    </cofactor>
</comment>
<comment type="subunit">
    <text>Homodimer.</text>
</comment>
<comment type="similarity">
    <text evidence="1">Belongs to the flavoredoxin family.</text>
</comment>
<proteinExistence type="evidence at protein level"/>
<evidence type="ECO:0000305" key="1"/>
<evidence type="ECO:0007829" key="2">
    <source>
        <dbReference type="PDB" id="1EJE"/>
    </source>
</evidence>
<gene>
    <name type="ordered locus">MTH_152</name>
</gene>
<feature type="chain" id="PRO_0000085528" description="Protein MTH_152">
    <location>
        <begin position="1"/>
        <end position="186"/>
    </location>
</feature>
<feature type="turn" evidence="2">
    <location>
        <begin position="3"/>
        <end position="5"/>
    </location>
</feature>
<feature type="helix" evidence="2">
    <location>
        <begin position="11"/>
        <end position="16"/>
    </location>
</feature>
<feature type="strand" evidence="2">
    <location>
        <begin position="24"/>
        <end position="29"/>
    </location>
</feature>
<feature type="strand" evidence="2">
    <location>
        <begin position="35"/>
        <end position="40"/>
    </location>
</feature>
<feature type="strand" evidence="2">
    <location>
        <begin position="42"/>
        <end position="47"/>
    </location>
</feature>
<feature type="turn" evidence="2">
    <location>
        <begin position="48"/>
        <end position="51"/>
    </location>
</feature>
<feature type="strand" evidence="2">
    <location>
        <begin position="52"/>
        <end position="57"/>
    </location>
</feature>
<feature type="helix" evidence="2">
    <location>
        <begin position="62"/>
        <end position="70"/>
    </location>
</feature>
<feature type="strand" evidence="2">
    <location>
        <begin position="72"/>
        <end position="77"/>
    </location>
</feature>
<feature type="helix" evidence="2">
    <location>
        <begin position="80"/>
        <end position="82"/>
    </location>
</feature>
<feature type="helix" evidence="2">
    <location>
        <begin position="83"/>
        <end position="88"/>
    </location>
</feature>
<feature type="helix" evidence="2">
    <location>
        <begin position="99"/>
        <end position="103"/>
    </location>
</feature>
<feature type="strand" evidence="2">
    <location>
        <begin position="111"/>
        <end position="115"/>
    </location>
</feature>
<feature type="strand" evidence="2">
    <location>
        <begin position="122"/>
        <end position="135"/>
    </location>
</feature>
<feature type="strand" evidence="2">
    <location>
        <begin position="138"/>
        <end position="150"/>
    </location>
</feature>
<feature type="helix" evidence="2">
    <location>
        <begin position="162"/>
        <end position="165"/>
    </location>
</feature>
<feature type="strand" evidence="2">
    <location>
        <begin position="167"/>
        <end position="172"/>
    </location>
</feature>
<feature type="strand" evidence="2">
    <location>
        <begin position="175"/>
        <end position="178"/>
    </location>
</feature>
<keyword id="KW-0002">3D-structure</keyword>
<keyword id="KW-0285">Flavoprotein</keyword>
<keyword id="KW-0288">FMN</keyword>
<keyword id="KW-1185">Reference proteome</keyword>
<name>P152_METTH</name>
<dbReference type="EMBL" id="AE000666">
    <property type="protein sequence ID" value="AAB84658.1"/>
    <property type="molecule type" value="Genomic_DNA"/>
</dbReference>
<dbReference type="PIR" id="G69069">
    <property type="entry name" value="G69069"/>
</dbReference>
<dbReference type="PDB" id="1EJE">
    <property type="method" value="X-ray"/>
    <property type="resolution" value="2.20 A"/>
    <property type="chains" value="A=1-186"/>
</dbReference>
<dbReference type="PDBsum" id="1EJE"/>
<dbReference type="SMR" id="O26255"/>
<dbReference type="STRING" id="187420.MTH_152"/>
<dbReference type="PaxDb" id="187420-MTH_152"/>
<dbReference type="EnsemblBacteria" id="AAB84658">
    <property type="protein sequence ID" value="AAB84658"/>
    <property type="gene ID" value="MTH_152"/>
</dbReference>
<dbReference type="KEGG" id="mth:MTH_152"/>
<dbReference type="PATRIC" id="fig|187420.15.peg.124"/>
<dbReference type="HOGENOM" id="CLU_059021_3_1_2"/>
<dbReference type="InParanoid" id="O26255"/>
<dbReference type="EvolutionaryTrace" id="O26255"/>
<dbReference type="Proteomes" id="UP000005223">
    <property type="component" value="Chromosome"/>
</dbReference>
<dbReference type="GO" id="GO:0010181">
    <property type="term" value="F:FMN binding"/>
    <property type="evidence" value="ECO:0007669"/>
    <property type="project" value="InterPro"/>
</dbReference>
<dbReference type="Gene3D" id="2.30.110.10">
    <property type="entry name" value="Electron Transport, Fmn-binding Protein, Chain A"/>
    <property type="match status" value="1"/>
</dbReference>
<dbReference type="InterPro" id="IPR002563">
    <property type="entry name" value="Flavin_Rdtase-like_dom"/>
</dbReference>
<dbReference type="InterPro" id="IPR012349">
    <property type="entry name" value="Split_barrel_FMN-bd"/>
</dbReference>
<dbReference type="PANTHER" id="PTHR33798:SF5">
    <property type="entry name" value="FLAVIN REDUCTASE LIKE DOMAIN-CONTAINING PROTEIN"/>
    <property type="match status" value="1"/>
</dbReference>
<dbReference type="PANTHER" id="PTHR33798">
    <property type="entry name" value="FLAVOPROTEIN OXYGENASE"/>
    <property type="match status" value="1"/>
</dbReference>
<dbReference type="Pfam" id="PF01613">
    <property type="entry name" value="Flavin_Reduct"/>
    <property type="match status" value="1"/>
</dbReference>
<dbReference type="SMART" id="SM00903">
    <property type="entry name" value="Flavin_Reduct"/>
    <property type="match status" value="1"/>
</dbReference>
<dbReference type="SUPFAM" id="SSF50475">
    <property type="entry name" value="FMN-binding split barrel"/>
    <property type="match status" value="1"/>
</dbReference>
<accession>O26255</accession>
<reference key="1">
    <citation type="journal article" date="1997" name="J. Bacteriol.">
        <title>Complete genome sequence of Methanobacterium thermoautotrophicum deltaH: functional analysis and comparative genomics.</title>
        <authorList>
            <person name="Smith D.R."/>
            <person name="Doucette-Stamm L.A."/>
            <person name="Deloughery C."/>
            <person name="Lee H.-M."/>
            <person name="Dubois J."/>
            <person name="Aldredge T."/>
            <person name="Bashirzadeh R."/>
            <person name="Blakely D."/>
            <person name="Cook R."/>
            <person name="Gilbert K."/>
            <person name="Harrison D."/>
            <person name="Hoang L."/>
            <person name="Keagle P."/>
            <person name="Lumm W."/>
            <person name="Pothier B."/>
            <person name="Qiu D."/>
            <person name="Spadafora R."/>
            <person name="Vicare R."/>
            <person name="Wang Y."/>
            <person name="Wierzbowski J."/>
            <person name="Gibson R."/>
            <person name="Jiwani N."/>
            <person name="Caruso A."/>
            <person name="Bush D."/>
            <person name="Safer H."/>
            <person name="Patwell D."/>
            <person name="Prabhakar S."/>
            <person name="McDougall S."/>
            <person name="Shimer G."/>
            <person name="Goyal A."/>
            <person name="Pietrovski S."/>
            <person name="Church G.M."/>
            <person name="Daniels C.J."/>
            <person name="Mao J.-I."/>
            <person name="Rice P."/>
            <person name="Noelling J."/>
            <person name="Reeve J.N."/>
        </authorList>
    </citation>
    <scope>NUCLEOTIDE SEQUENCE [LARGE SCALE GENOMIC DNA]</scope>
    <source>
        <strain>ATCC 29096 / DSM 1053 / JCM 10044 / NBRC 100330 / Delta H</strain>
    </source>
</reference>
<reference key="2">
    <citation type="journal article" date="2000" name="Nat. Struct. Biol.">
        <title>Structural proteomics of an archaeon.</title>
        <authorList>
            <person name="Christendat D."/>
            <person name="Yee A."/>
            <person name="Dharamsi A."/>
            <person name="Kluger Y."/>
            <person name="Savchenko A."/>
            <person name="Cort J.R."/>
            <person name="Booth V."/>
            <person name="Mackereth C.D."/>
            <person name="Saridakis V."/>
            <person name="Ekiel I."/>
            <person name="Kozlov G."/>
            <person name="Maxwell K.L."/>
            <person name="Wu N."/>
            <person name="McIntosh L.P."/>
            <person name="Gehring K."/>
            <person name="Kennedy M.A."/>
            <person name="Davidson A.R."/>
            <person name="Pai E.F."/>
            <person name="Gerstein M."/>
            <person name="Edwards A.M."/>
            <person name="Arrowsmith C.H."/>
        </authorList>
    </citation>
    <scope>X-RAY CRYSTALLOGRAPHY (2.2 ANGSTROMS)</scope>
</reference>
<sequence>MMSMDFEDFPVESAHRILTPRPTVMVTTVDEEGNINAAPFSFTMPVSIDPPVVAFASAPDHHTARNIESTHEFVINITPADIIERMWVTARDIPAGENELEAAGLAWTSSRRVKPPRIVEAPGHLECELLRMFEVGDHNLITGSVVSASVRSGAVKEGLLDVESVKPVLHVGGNKFVVGDHVRHVE</sequence>
<protein>
    <recommendedName>
        <fullName>Protein MTH_152</fullName>
    </recommendedName>
</protein>